<protein>
    <recommendedName>
        <fullName evidence="1">Probable septum site-determining protein MinC</fullName>
    </recommendedName>
</protein>
<feature type="chain" id="PRO_1000047802" description="Probable septum site-determining protein MinC">
    <location>
        <begin position="1"/>
        <end position="228"/>
    </location>
</feature>
<keyword id="KW-0131">Cell cycle</keyword>
<keyword id="KW-0132">Cell division</keyword>
<keyword id="KW-0717">Septation</keyword>
<dbReference type="EMBL" id="AE017355">
    <property type="protein sequence ID" value="AAT60840.1"/>
    <property type="molecule type" value="Genomic_DNA"/>
</dbReference>
<dbReference type="RefSeq" id="WP_000391517.1">
    <property type="nucleotide sequence ID" value="NC_005957.1"/>
</dbReference>
<dbReference type="RefSeq" id="YP_038500.1">
    <property type="nucleotide sequence ID" value="NC_005957.1"/>
</dbReference>
<dbReference type="SMR" id="Q6HD76"/>
<dbReference type="GeneID" id="93006651"/>
<dbReference type="KEGG" id="btk:BT9727_4183"/>
<dbReference type="PATRIC" id="fig|281309.8.peg.4461"/>
<dbReference type="HOGENOM" id="CLU_048711_1_1_9"/>
<dbReference type="Proteomes" id="UP000001301">
    <property type="component" value="Chromosome"/>
</dbReference>
<dbReference type="GO" id="GO:0000902">
    <property type="term" value="P:cell morphogenesis"/>
    <property type="evidence" value="ECO:0007669"/>
    <property type="project" value="InterPro"/>
</dbReference>
<dbReference type="GO" id="GO:0000917">
    <property type="term" value="P:division septum assembly"/>
    <property type="evidence" value="ECO:0007669"/>
    <property type="project" value="UniProtKB-KW"/>
</dbReference>
<dbReference type="GO" id="GO:1901891">
    <property type="term" value="P:regulation of cell septum assembly"/>
    <property type="evidence" value="ECO:0007669"/>
    <property type="project" value="InterPro"/>
</dbReference>
<dbReference type="FunFam" id="2.160.20.70:FF:000003">
    <property type="entry name" value="Probable septum site-determining protein MinC"/>
    <property type="match status" value="1"/>
</dbReference>
<dbReference type="FunFam" id="3.30.160.540:FF:000001">
    <property type="entry name" value="Probable septum site-determining protein MinC"/>
    <property type="match status" value="1"/>
</dbReference>
<dbReference type="Gene3D" id="2.160.20.70">
    <property type="match status" value="1"/>
</dbReference>
<dbReference type="Gene3D" id="3.30.160.540">
    <property type="match status" value="1"/>
</dbReference>
<dbReference type="HAMAP" id="MF_00267">
    <property type="entry name" value="MinC"/>
    <property type="match status" value="1"/>
</dbReference>
<dbReference type="InterPro" id="IPR016098">
    <property type="entry name" value="CAP/MinC_C"/>
</dbReference>
<dbReference type="InterPro" id="IPR013033">
    <property type="entry name" value="MinC"/>
</dbReference>
<dbReference type="InterPro" id="IPR036145">
    <property type="entry name" value="MinC_C_sf"/>
</dbReference>
<dbReference type="InterPro" id="IPR055219">
    <property type="entry name" value="MinC_N_1"/>
</dbReference>
<dbReference type="InterPro" id="IPR005526">
    <property type="entry name" value="Septum_form_inhib_MinC_C"/>
</dbReference>
<dbReference type="NCBIfam" id="TIGR01222">
    <property type="entry name" value="minC"/>
    <property type="match status" value="1"/>
</dbReference>
<dbReference type="PANTHER" id="PTHR34108">
    <property type="entry name" value="SEPTUM SITE-DETERMINING PROTEIN MINC"/>
    <property type="match status" value="1"/>
</dbReference>
<dbReference type="PANTHER" id="PTHR34108:SF1">
    <property type="entry name" value="SEPTUM SITE-DETERMINING PROTEIN MINC"/>
    <property type="match status" value="1"/>
</dbReference>
<dbReference type="Pfam" id="PF03775">
    <property type="entry name" value="MinC_C"/>
    <property type="match status" value="1"/>
</dbReference>
<dbReference type="Pfam" id="PF22642">
    <property type="entry name" value="MinC_N_1"/>
    <property type="match status" value="1"/>
</dbReference>
<dbReference type="SUPFAM" id="SSF63848">
    <property type="entry name" value="Cell-division inhibitor MinC, C-terminal domain"/>
    <property type="match status" value="1"/>
</dbReference>
<proteinExistence type="inferred from homology"/>
<evidence type="ECO:0000255" key="1">
    <source>
        <dbReference type="HAMAP-Rule" id="MF_00267"/>
    </source>
</evidence>
<accession>Q6HD76</accession>
<reference key="1">
    <citation type="journal article" date="2006" name="J. Bacteriol.">
        <title>Pathogenomic sequence analysis of Bacillus cereus and Bacillus thuringiensis isolates closely related to Bacillus anthracis.</title>
        <authorList>
            <person name="Han C.S."/>
            <person name="Xie G."/>
            <person name="Challacombe J.F."/>
            <person name="Altherr M.R."/>
            <person name="Bhotika S.S."/>
            <person name="Bruce D."/>
            <person name="Campbell C.S."/>
            <person name="Campbell M.L."/>
            <person name="Chen J."/>
            <person name="Chertkov O."/>
            <person name="Cleland C."/>
            <person name="Dimitrijevic M."/>
            <person name="Doggett N.A."/>
            <person name="Fawcett J.J."/>
            <person name="Glavina T."/>
            <person name="Goodwin L.A."/>
            <person name="Hill K.K."/>
            <person name="Hitchcock P."/>
            <person name="Jackson P.J."/>
            <person name="Keim P."/>
            <person name="Kewalramani A.R."/>
            <person name="Longmire J."/>
            <person name="Lucas S."/>
            <person name="Malfatti S."/>
            <person name="McMurry K."/>
            <person name="Meincke L.J."/>
            <person name="Misra M."/>
            <person name="Moseman B.L."/>
            <person name="Mundt M."/>
            <person name="Munk A.C."/>
            <person name="Okinaka R.T."/>
            <person name="Parson-Quintana B."/>
            <person name="Reilly L.P."/>
            <person name="Richardson P."/>
            <person name="Robinson D.L."/>
            <person name="Rubin E."/>
            <person name="Saunders E."/>
            <person name="Tapia R."/>
            <person name="Tesmer J.G."/>
            <person name="Thayer N."/>
            <person name="Thompson L.S."/>
            <person name="Tice H."/>
            <person name="Ticknor L.O."/>
            <person name="Wills P.L."/>
            <person name="Brettin T.S."/>
            <person name="Gilna P."/>
        </authorList>
    </citation>
    <scope>NUCLEOTIDE SEQUENCE [LARGE SCALE GENOMIC DNA]</scope>
    <source>
        <strain>97-27</strain>
    </source>
</reference>
<comment type="function">
    <text evidence="1">Cell division inhibitor that blocks the formation of polar Z ring septums. Rapidly oscillates between the poles of the cell to destabilize FtsZ filaments that have formed before they mature into polar Z rings. Prevents FtsZ polymerization.</text>
</comment>
<comment type="subunit">
    <text evidence="1">Interacts with MinD and FtsZ.</text>
</comment>
<comment type="similarity">
    <text evidence="1">Belongs to the MinC family.</text>
</comment>
<organism>
    <name type="scientific">Bacillus thuringiensis subsp. konkukian (strain 97-27)</name>
    <dbReference type="NCBI Taxonomy" id="281309"/>
    <lineage>
        <taxon>Bacteria</taxon>
        <taxon>Bacillati</taxon>
        <taxon>Bacillota</taxon>
        <taxon>Bacilli</taxon>
        <taxon>Bacillales</taxon>
        <taxon>Bacillaceae</taxon>
        <taxon>Bacillus</taxon>
        <taxon>Bacillus cereus group</taxon>
    </lineage>
</organism>
<sequence>MEEKKQQNVTIKGTKDGITLHLDDCCSFSELLKELDEKLSTHYYDGDGRSLIEVHVKVGNRYLTEVQQEEIRTLIRNKKNLVVDSIESDVITKEEAIAWKEETEIVPISKIVRSGQVLHVKGNLLLIGDVNPGGTVIAGGNIFVVGSLRGIAHAGYYGDSDAVIAASVMNPMQLRISDVAMRAPEEKEDGAEAAECAYINENNHIVVDRLQLLTHLRPNLTKLERGIV</sequence>
<gene>
    <name evidence="1" type="primary">minC</name>
    <name type="ordered locus">BT9727_4183</name>
</gene>
<name>MINC_BACHK</name>